<sequence length="442" mass="50853">MAHTSDGWGAPYDNQTYVEAYEQLEIALLEPLDRILETANVEEFRPKFKNHQDPNDRKNKKNNDEEWRDSIYNIATDESDTDDHEQRKNFFQPPLQVQRNSFVKNTLMEFKRSSQIDISRLAVMGCGEMSLEKGICEYLGSFGTINVLSVDIDEPSLSIGQQLLGKHLERNAEILAVETGLPVLMRSYVGDILEPDHRFADVDAIVSMEVVEHIPLPNAKKFVENVLGTLMPRIFIFSTPNHEYNAVFGMEPGEFRHGDHKFEMNRKEFSNWLEELSIRFPHYQIDPPHYIGMTRGYENLSGASQAAVCRLQVDLNTTLPQEVTPYEMVGHLPCRLGSRLIAYNLVKEAFLDWLEKIELQEHEPRTDGYSPYWIFNVQNILHHLKAPVSFALTIDEKVAIKYIQGMTSRKVHAEYSHGFNGIVILQMHSKEELIKTVQDNTL</sequence>
<evidence type="ECO:0000250" key="1">
    <source>
        <dbReference type="UniProtKB" id="Q5T8I9"/>
    </source>
</evidence>
<evidence type="ECO:0000250" key="2">
    <source>
        <dbReference type="UniProtKB" id="Q9C5Q8"/>
    </source>
</evidence>
<evidence type="ECO:0000269" key="3">
    <source>
    </source>
</evidence>
<evidence type="ECO:0000269" key="4">
    <source>
    </source>
</evidence>
<evidence type="ECO:0000269" key="5">
    <source>
    </source>
</evidence>
<evidence type="ECO:0000303" key="6">
    <source>
    </source>
</evidence>
<evidence type="ECO:0000303" key="7">
    <source>
    </source>
</evidence>
<evidence type="ECO:0000303" key="8">
    <source>
    </source>
</evidence>
<evidence type="ECO:0000305" key="9"/>
<evidence type="ECO:0000305" key="10">
    <source>
    </source>
</evidence>
<evidence type="ECO:0000305" key="11">
    <source>
    </source>
</evidence>
<evidence type="ECO:0000312" key="12">
    <source>
        <dbReference type="WormBase" id="C02F5.6b"/>
    </source>
</evidence>
<comment type="function">
    <text evidence="3 4 5 9">Methyltransferase that adds a 2'-O-methyl group at the 3'-end of PIWI-interacting RNAs (piRNAs) and small interfering RNAs (siRNAs) which are classes of regulatory RNAs that are involved in gene silencing in endogenous RNA interference (RNAi) pathways (PubMed:22536158, PubMed:22548001, PubMed:22829772). Methylation protects the 3'-end of small RNAs from tailing and trimming and could constitute a recognition signal for appropriate argonaute machineries (Probable). Methylates and stabilizes 26G-siRNAs (a class of 26 nucleotide siRNAs that possess a monophosphorylated guanine residue at the 5'-end) when they are bound by argonaute protein ergo-1 (PubMed:22536158, PubMed:22548001, PubMed:22829772). This occurs in the female germline and embryo, but not in the male germline (PubMed:22548001). Does not methylate 26G-siRNAs bound by argonaute proteins alg-3 or alg-4 (PubMed:22548001, PubMed:22829772). Methylates and stabilizes 21U-piRNAs, which are a class of 21 nucleotide piRNAs that possess a uracil residue at the 5'-end, in the male and female germline (PubMed:22536158, PubMed:22548001, PubMed:22829772). In addition, may play a role in exogenous RNAi (exoRNAi) pathways in the germline (PubMed:22829772).</text>
</comment>
<comment type="catalytic activity">
    <reaction evidence="5 10 11">
        <text>small RNA 3'-end nucleotide + S-adenosyl-L-methionine = small RNA 3'-end 2'-O-methylnucleotide + S-adenosyl-L-homocysteine + H(+)</text>
        <dbReference type="Rhea" id="RHEA:37887"/>
        <dbReference type="Rhea" id="RHEA-COMP:10415"/>
        <dbReference type="Rhea" id="RHEA-COMP:10416"/>
        <dbReference type="ChEBI" id="CHEBI:15378"/>
        <dbReference type="ChEBI" id="CHEBI:57856"/>
        <dbReference type="ChEBI" id="CHEBI:59789"/>
        <dbReference type="ChEBI" id="CHEBI:74896"/>
        <dbReference type="ChEBI" id="CHEBI:74898"/>
        <dbReference type="EC" id="2.1.1.386"/>
    </reaction>
</comment>
<comment type="cofactor">
    <cofactor evidence="2">
        <name>Mg(2+)</name>
        <dbReference type="ChEBI" id="CHEBI:18420"/>
    </cofactor>
    <text evidence="2">Binds 1 Mg(2+) ion per subunit.</text>
</comment>
<comment type="subcellular location">
    <subcellularLocation>
        <location evidence="4 5">Cytoplasm</location>
    </subcellularLocation>
    <subcellularLocation>
        <location evidence="4">Nucleus</location>
        <location evidence="4">Nucleoplasm</location>
    </subcellularLocation>
    <subcellularLocation>
        <location evidence="5">Cytoplasmic granule</location>
    </subcellularLocation>
    <text evidence="4 5">Nucleoplasm localization ceases following fertilization (PubMed:22548001). In embryos, diffusely localized in the cytoplasm (PubMed:22829772). In cells of the P-lineage (germ cell progenitor cells) in embryos, localizes to granules and at later postembryonic stages of development, localizes to perinuclear granules in the germ cells (PubMed:22829772).</text>
</comment>
<comment type="tissue specificity">
    <text evidence="4">Broadly expressed in the germline and somatic tissues in both hermaphrodites and males.</text>
</comment>
<comment type="developmental stage">
    <text evidence="4 5">Expressed in the germline and soma throughout development (at the protein level) (PubMed:22548001, PubMed:22829772). Highly expressed in embryos (PubMed:22548001, PubMed:22829772). Expression is lowest during the early larval stages and increases as the germline proliferates, peaking at the adult stage (PubMed:22548001).</text>
</comment>
<comment type="disruption phenotype">
    <text evidence="3">RNAi-mediated knockdown suppresses RNAi-mediated silencing by siR-1, which are 22G-siRNAs (a class of secondary 22 nucleotide siRNAs that possess a triphosphorylated guanine residue at the 5'-end and are formed from 21U-piRNAs and 26G-siRNAs).</text>
</comment>
<comment type="similarity">
    <text evidence="9">Belongs to the methyltransferase superfamily. HEN1 family.</text>
</comment>
<organism>
    <name type="scientific">Caenorhabditis elegans</name>
    <dbReference type="NCBI Taxonomy" id="6239"/>
    <lineage>
        <taxon>Eukaryota</taxon>
        <taxon>Metazoa</taxon>
        <taxon>Ecdysozoa</taxon>
        <taxon>Nematoda</taxon>
        <taxon>Chromadorea</taxon>
        <taxon>Rhabditida</taxon>
        <taxon>Rhabditina</taxon>
        <taxon>Rhabditomorpha</taxon>
        <taxon>Rhabditoidea</taxon>
        <taxon>Rhabditidae</taxon>
        <taxon>Peloderinae</taxon>
        <taxon>Caenorhabditis</taxon>
    </lineage>
</organism>
<feature type="chain" id="PRO_0000065111" description="Small RNA 2'-O-methyltransferase">
    <location>
        <begin position="1"/>
        <end position="442"/>
    </location>
</feature>
<feature type="binding site" evidence="1">
    <location>
        <position position="125"/>
    </location>
    <ligand>
        <name>S-adenosyl-L-methionine</name>
        <dbReference type="ChEBI" id="CHEBI:59789"/>
    </ligand>
</feature>
<feature type="binding site" evidence="1">
    <location>
        <position position="151"/>
    </location>
    <ligand>
        <name>S-adenosyl-L-methionine</name>
        <dbReference type="ChEBI" id="CHEBI:59789"/>
    </ligand>
</feature>
<feature type="binding site" evidence="2">
    <location>
        <position position="209"/>
    </location>
    <ligand>
        <name>Mg(2+)</name>
        <dbReference type="ChEBI" id="CHEBI:18420"/>
    </ligand>
</feature>
<feature type="binding site" evidence="2">
    <location>
        <position position="212"/>
    </location>
    <ligand>
        <name>Mg(2+)</name>
        <dbReference type="ChEBI" id="CHEBI:18420"/>
    </ligand>
</feature>
<feature type="binding site" evidence="2">
    <location>
        <position position="213"/>
    </location>
    <ligand>
        <name>Mg(2+)</name>
        <dbReference type="ChEBI" id="CHEBI:18420"/>
    </ligand>
</feature>
<feature type="binding site" evidence="2">
    <location>
        <position position="260"/>
    </location>
    <ligand>
        <name>Mg(2+)</name>
        <dbReference type="ChEBI" id="CHEBI:18420"/>
    </ligand>
</feature>
<feature type="mutagenesis site" description="In pk2452; viable with reduced brood size. Reduces methyltransferase activity. Reduces methylation of 26G-siRNAs and 21U-piRNAs." evidence="5">
    <original>D</original>
    <variation>N</variation>
    <location>
        <position position="151"/>
    </location>
</feature>
<feature type="mutagenesis site" description="In pk2295; viable with reduced brood size. Reduces methyltransferase activity. Reduces methylation of 26G-siRNAs and 21U-piRNAs. Reduces levels of 22G-siRNAs (which are formed from 21U-piRNAs and 26G-siRNAs) in embryos. Suppresses RNAi-mediated silencing by siR-1, which are 22G-siRNAs. Reduces levels of 21U-piRNAs in embryos and modestly reduces levels of 21U-piRNAs in adults, but 21U-piRNAs levels are unaffected at the L4 larval stage. Mixed exoRNAi defects with enhanced RNAi (Eri phenotype) in somatic cells in a dpy-13 RNAi-mediated knockdown background, and defective RNAi (Rde phenotype) in somatic cells in a pos-1 RNAi-mediated knockdown background." evidence="3 5">
    <location>
        <begin position="347"/>
        <end position="442"/>
    </location>
</feature>
<accession>P34283</accession>
<accession>Q8T3F9</accession>
<name>HENMT_CAEEL</name>
<protein>
    <recommendedName>
        <fullName evidence="9">Small RNA 2'-O-methyltransferase</fullName>
        <ecNumber evidence="5 10 11">2.1.1.386</ecNumber>
    </recommendedName>
    <alternativeName>
        <fullName evidence="9">HEN1 methyltransferase homolog</fullName>
    </alternativeName>
</protein>
<keyword id="KW-0963">Cytoplasm</keyword>
<keyword id="KW-0460">Magnesium</keyword>
<keyword id="KW-0479">Metal-binding</keyword>
<keyword id="KW-0489">Methyltransferase</keyword>
<keyword id="KW-0539">Nucleus</keyword>
<keyword id="KW-1185">Reference proteome</keyword>
<keyword id="KW-0694">RNA-binding</keyword>
<keyword id="KW-0943">RNA-mediated gene silencing</keyword>
<keyword id="KW-0949">S-adenosyl-L-methionine</keyword>
<keyword id="KW-0808">Transferase</keyword>
<proteinExistence type="evidence at protein level"/>
<dbReference type="EC" id="2.1.1.386" evidence="5 10 11"/>
<dbReference type="EMBL" id="BX284603">
    <property type="protein sequence ID" value="CCD62631.1"/>
    <property type="molecule type" value="Genomic_DNA"/>
</dbReference>
<dbReference type="PIR" id="S44608">
    <property type="entry name" value="S44608"/>
</dbReference>
<dbReference type="RefSeq" id="NP_001309472.1">
    <property type="nucleotide sequence ID" value="NM_001322688.3"/>
</dbReference>
<dbReference type="SMR" id="P34283"/>
<dbReference type="BioGRID" id="41364">
    <property type="interactions" value="4"/>
</dbReference>
<dbReference type="FunCoup" id="P34283">
    <property type="interactions" value="39"/>
</dbReference>
<dbReference type="STRING" id="6239.C02F5.6b.1"/>
<dbReference type="PaxDb" id="6239-C02F5.6b"/>
<dbReference type="PeptideAtlas" id="P34283"/>
<dbReference type="EnsemblMetazoa" id="C02F5.6b.1">
    <property type="protein sequence ID" value="C02F5.6b.1"/>
    <property type="gene ID" value="WBGene00015349"/>
</dbReference>
<dbReference type="GeneID" id="176159"/>
<dbReference type="KEGG" id="cel:CELE_C02F5.6"/>
<dbReference type="UCSC" id="C02F5.6b">
    <property type="organism name" value="c. elegans"/>
</dbReference>
<dbReference type="AGR" id="WB:WBGene00015349"/>
<dbReference type="CTD" id="176159"/>
<dbReference type="WormBase" id="C02F5.6b">
    <property type="protein sequence ID" value="CE51509"/>
    <property type="gene ID" value="WBGene00015349"/>
    <property type="gene designation" value="henn-1"/>
</dbReference>
<dbReference type="eggNOG" id="KOG1045">
    <property type="taxonomic scope" value="Eukaryota"/>
</dbReference>
<dbReference type="GeneTree" id="ENSGT00390000004798"/>
<dbReference type="InParanoid" id="P34283"/>
<dbReference type="OrthoDB" id="2154311at2759"/>
<dbReference type="PhylomeDB" id="P34283"/>
<dbReference type="PRO" id="PR:P34283"/>
<dbReference type="Proteomes" id="UP000001940">
    <property type="component" value="Chromosome III"/>
</dbReference>
<dbReference type="Bgee" id="WBGene00015349">
    <property type="expression patterns" value="Expressed in adult organism and 4 other cell types or tissues"/>
</dbReference>
<dbReference type="GO" id="GO:0005737">
    <property type="term" value="C:cytoplasm"/>
    <property type="evidence" value="ECO:0000314"/>
    <property type="project" value="WormBase"/>
</dbReference>
<dbReference type="GO" id="GO:0005654">
    <property type="term" value="C:nucleoplasm"/>
    <property type="evidence" value="ECO:0000314"/>
    <property type="project" value="WormBase"/>
</dbReference>
<dbReference type="GO" id="GO:0005634">
    <property type="term" value="C:nucleus"/>
    <property type="evidence" value="ECO:0000314"/>
    <property type="project" value="WormBase"/>
</dbReference>
<dbReference type="GO" id="GO:0048471">
    <property type="term" value="C:perinuclear region of cytoplasm"/>
    <property type="evidence" value="ECO:0000314"/>
    <property type="project" value="WormBase"/>
</dbReference>
<dbReference type="GO" id="GO:0046872">
    <property type="term" value="F:metal ion binding"/>
    <property type="evidence" value="ECO:0007669"/>
    <property type="project" value="UniProtKB-KW"/>
</dbReference>
<dbReference type="GO" id="GO:0008171">
    <property type="term" value="F:O-methyltransferase activity"/>
    <property type="evidence" value="ECO:0000318"/>
    <property type="project" value="GO_Central"/>
</dbReference>
<dbReference type="GO" id="GO:0003723">
    <property type="term" value="F:RNA binding"/>
    <property type="evidence" value="ECO:0007669"/>
    <property type="project" value="UniProtKB-KW"/>
</dbReference>
<dbReference type="GO" id="GO:0008173">
    <property type="term" value="F:RNA methyltransferase activity"/>
    <property type="evidence" value="ECO:0000314"/>
    <property type="project" value="WormBase"/>
</dbReference>
<dbReference type="GO" id="GO:0090486">
    <property type="term" value="F:small RNA 2'-O-methyltransferase activity"/>
    <property type="evidence" value="ECO:0000314"/>
    <property type="project" value="UniProtKB"/>
</dbReference>
<dbReference type="GO" id="GO:0034587">
    <property type="term" value="P:piRNA processing"/>
    <property type="evidence" value="ECO:0000315"/>
    <property type="project" value="UniProtKB"/>
</dbReference>
<dbReference type="GO" id="GO:0001510">
    <property type="term" value="P:RNA methylation"/>
    <property type="evidence" value="ECO:0000314"/>
    <property type="project" value="WormBase"/>
</dbReference>
<dbReference type="GO" id="GO:0030422">
    <property type="term" value="P:siRNA processing"/>
    <property type="evidence" value="ECO:0000315"/>
    <property type="project" value="GO_Central"/>
</dbReference>
<dbReference type="FunFam" id="3.40.50.150:FF:000745">
    <property type="entry name" value="Protein CBG16658"/>
    <property type="match status" value="1"/>
</dbReference>
<dbReference type="Gene3D" id="3.40.50.150">
    <property type="entry name" value="Vaccinia Virus protein VP39"/>
    <property type="match status" value="1"/>
</dbReference>
<dbReference type="InterPro" id="IPR026610">
    <property type="entry name" value="Hen1"/>
</dbReference>
<dbReference type="InterPro" id="IPR029063">
    <property type="entry name" value="SAM-dependent_MTases_sf"/>
</dbReference>
<dbReference type="PANTHER" id="PTHR21404">
    <property type="entry name" value="HEN1"/>
    <property type="match status" value="1"/>
</dbReference>
<dbReference type="PANTHER" id="PTHR21404:SF3">
    <property type="entry name" value="SMALL RNA 2'-O-METHYLTRANSFERASE"/>
    <property type="match status" value="1"/>
</dbReference>
<dbReference type="SUPFAM" id="SSF53335">
    <property type="entry name" value="S-adenosyl-L-methionine-dependent methyltransferases"/>
    <property type="match status" value="1"/>
</dbReference>
<gene>
    <name evidence="6 7 8 12" type="primary">henn-1</name>
    <name evidence="12" type="ORF">C02F5.6</name>
</gene>
<reference key="1">
    <citation type="journal article" date="1994" name="Nature">
        <title>2.2 Mb of contiguous nucleotide sequence from chromosome III of C. elegans.</title>
        <authorList>
            <person name="Wilson R."/>
            <person name="Ainscough R."/>
            <person name="Anderson K."/>
            <person name="Baynes C."/>
            <person name="Berks M."/>
            <person name="Bonfield J."/>
            <person name="Burton J."/>
            <person name="Connell M."/>
            <person name="Copsey T."/>
            <person name="Cooper J."/>
            <person name="Coulson A."/>
            <person name="Craxton M."/>
            <person name="Dear S."/>
            <person name="Du Z."/>
            <person name="Durbin R."/>
            <person name="Favello A."/>
            <person name="Fraser A."/>
            <person name="Fulton L."/>
            <person name="Gardner A."/>
            <person name="Green P."/>
            <person name="Hawkins T."/>
            <person name="Hillier L."/>
            <person name="Jier M."/>
            <person name="Johnston L."/>
            <person name="Jones M."/>
            <person name="Kershaw J."/>
            <person name="Kirsten J."/>
            <person name="Laisster N."/>
            <person name="Latreille P."/>
            <person name="Lightning J."/>
            <person name="Lloyd C."/>
            <person name="Mortimore B."/>
            <person name="O'Callaghan M."/>
            <person name="Parsons J."/>
            <person name="Percy C."/>
            <person name="Rifken L."/>
            <person name="Roopra A."/>
            <person name="Saunders D."/>
            <person name="Shownkeen R."/>
            <person name="Sims M."/>
            <person name="Smaldon N."/>
            <person name="Smith A."/>
            <person name="Smith M."/>
            <person name="Sonnhammer E."/>
            <person name="Staden R."/>
            <person name="Sulston J."/>
            <person name="Thierry-Mieg J."/>
            <person name="Thomas K."/>
            <person name="Vaudin M."/>
            <person name="Vaughan K."/>
            <person name="Waterston R."/>
            <person name="Watson A."/>
            <person name="Weinstock L."/>
            <person name="Wilkinson-Sproat J."/>
            <person name="Wohldman P."/>
        </authorList>
    </citation>
    <scope>NUCLEOTIDE SEQUENCE [LARGE SCALE GENOMIC DNA]</scope>
    <source>
        <strain>Bristol N2</strain>
    </source>
</reference>
<reference key="2">
    <citation type="journal article" date="1998" name="Science">
        <title>Genome sequence of the nematode C. elegans: a platform for investigating biology.</title>
        <authorList>
            <consortium name="The C. elegans sequencing consortium"/>
        </authorList>
    </citation>
    <scope>NUCLEOTIDE SEQUENCE [LARGE SCALE GENOMIC DNA]</scope>
    <source>
        <strain>Bristol N2</strain>
    </source>
</reference>
<reference key="3">
    <citation type="journal article" date="2012" name="PLoS Genet.">
        <title>PIWI associated siRNAs and piRNAs specifically require the Caenorhabditis elegans HEN1 ortholog henn-1.</title>
        <authorList>
            <person name="Montgomery T.A."/>
            <person name="Rim Y.S."/>
            <person name="Zhang C."/>
            <person name="Dowen R.H."/>
            <person name="Phillips C.M."/>
            <person name="Fischer S.E."/>
            <person name="Ruvkun G."/>
        </authorList>
    </citation>
    <scope>FUNCTION</scope>
    <scope>CATALYTIC ACTIVITY</scope>
    <scope>DISRUPTION PHENOTYPE</scope>
    <scope>MUTAGENESIS OF 347-LYS--LEU-442</scope>
</reference>
<reference key="4">
    <citation type="journal article" date="2012" name="PLoS Genet.">
        <title>The Caenorhabditis elegans HEN1 ortholog, HENN-1, methylates and stabilizes select subclasses of germline small RNAs.</title>
        <authorList>
            <person name="Billi A.C."/>
            <person name="Alessi A.F."/>
            <person name="Khivansara V."/>
            <person name="Han T."/>
            <person name="Freeberg M."/>
            <person name="Mitani S."/>
            <person name="Kim J.K."/>
        </authorList>
    </citation>
    <scope>FUNCTION</scope>
    <scope>CATALYTIC ACTIVITY</scope>
    <scope>SUBCELLULAR LOCATION</scope>
    <scope>TISSUE SPECIFICITY</scope>
    <scope>DEVELOPMENTAL STAGE</scope>
</reference>
<reference key="5">
    <citation type="journal article" date="2012" name="PLoS Genet.">
        <title>Differential impact of the HEN1 homolog HENN-1 on 21U and 26G RNAs in the germline of Caenorhabditis elegans.</title>
        <authorList>
            <person name="Kamminga L.M."/>
            <person name="van Wolfswinkel J.C."/>
            <person name="Luteijn M.J."/>
            <person name="Kaaij L.J."/>
            <person name="Bagijn M.P."/>
            <person name="Sapetschnig A."/>
            <person name="Miska E.A."/>
            <person name="Berezikov E."/>
            <person name="Ketting R.F."/>
        </authorList>
    </citation>
    <scope>FUNCTION</scope>
    <scope>CATALYTIC ACTIVITY</scope>
    <scope>SUBCELLULAR LOCATION</scope>
    <scope>DEVELOPMENTAL STAGE</scope>
    <scope>MUTAGENESIS OF ASP-151 AND 347-LYS--LEU-442</scope>
</reference>